<keyword id="KW-0067">ATP-binding</keyword>
<keyword id="KW-0963">Cytoplasm</keyword>
<keyword id="KW-0227">DNA damage</keyword>
<keyword id="KW-0234">DNA repair</keyword>
<keyword id="KW-0235">DNA replication</keyword>
<keyword id="KW-0238">DNA-binding</keyword>
<keyword id="KW-0547">Nucleotide-binding</keyword>
<keyword id="KW-1185">Reference proteome</keyword>
<keyword id="KW-0742">SOS response</keyword>
<evidence type="ECO:0000255" key="1">
    <source>
        <dbReference type="HAMAP-Rule" id="MF_00365"/>
    </source>
</evidence>
<comment type="function">
    <text evidence="1">The RecF protein is involved in DNA metabolism; it is required for DNA replication and normal SOS inducibility. RecF binds preferentially to single-stranded, linear DNA. It also seems to bind ATP.</text>
</comment>
<comment type="subcellular location">
    <subcellularLocation>
        <location evidence="1">Cytoplasm</location>
    </subcellularLocation>
</comment>
<comment type="similarity">
    <text evidence="1">Belongs to the RecF family.</text>
</comment>
<sequence>MPLSRLLINNFRNLQAIDLELSPDFNFIVGHNGSGKTSLLEAIFYLGHGRSFKSHISNRIIHHHAENFVLHSKIDETQHQWSVGLQKNRAGDTLLKINGEDGKKIADLAHLLPMQVITPEGLTLLNGGPSYRRAFLDWGLFHQHLEFYSYWANLKRLLKQRNAALPQVKSYSELKAWDIELVRLAHLVTKMRTEYAEALRPEIEKTCRFFLPELPIRVSFHQGWENGADYADVLRQGFERDQNIGYTMVGPQKADFRFKANGLPVEDVLSRGQLKLLMCALRLAQGEYLVTQKKRQCLFLIDDFASELDPMKRELLAHRLRETGSQVFVTAITAEQLNQMHWQEYAQDKLFHLKEGKLKT</sequence>
<accession>Q7VMW3</accession>
<dbReference type="EMBL" id="AE017143">
    <property type="protein sequence ID" value="AAP95740.1"/>
    <property type="molecule type" value="Genomic_DNA"/>
</dbReference>
<dbReference type="RefSeq" id="WP_010944790.1">
    <property type="nucleotide sequence ID" value="NC_002940.2"/>
</dbReference>
<dbReference type="SMR" id="Q7VMW3"/>
<dbReference type="STRING" id="233412.HD_0849"/>
<dbReference type="KEGG" id="hdu:HD_0849"/>
<dbReference type="eggNOG" id="COG1195">
    <property type="taxonomic scope" value="Bacteria"/>
</dbReference>
<dbReference type="HOGENOM" id="CLU_040267_0_0_6"/>
<dbReference type="OrthoDB" id="9803889at2"/>
<dbReference type="Proteomes" id="UP000001022">
    <property type="component" value="Chromosome"/>
</dbReference>
<dbReference type="GO" id="GO:0005737">
    <property type="term" value="C:cytoplasm"/>
    <property type="evidence" value="ECO:0007669"/>
    <property type="project" value="UniProtKB-SubCell"/>
</dbReference>
<dbReference type="GO" id="GO:0005524">
    <property type="term" value="F:ATP binding"/>
    <property type="evidence" value="ECO:0007669"/>
    <property type="project" value="UniProtKB-UniRule"/>
</dbReference>
<dbReference type="GO" id="GO:0003697">
    <property type="term" value="F:single-stranded DNA binding"/>
    <property type="evidence" value="ECO:0007669"/>
    <property type="project" value="UniProtKB-UniRule"/>
</dbReference>
<dbReference type="GO" id="GO:0006260">
    <property type="term" value="P:DNA replication"/>
    <property type="evidence" value="ECO:0007669"/>
    <property type="project" value="UniProtKB-UniRule"/>
</dbReference>
<dbReference type="GO" id="GO:0000731">
    <property type="term" value="P:DNA synthesis involved in DNA repair"/>
    <property type="evidence" value="ECO:0007669"/>
    <property type="project" value="TreeGrafter"/>
</dbReference>
<dbReference type="GO" id="GO:0006302">
    <property type="term" value="P:double-strand break repair"/>
    <property type="evidence" value="ECO:0007669"/>
    <property type="project" value="TreeGrafter"/>
</dbReference>
<dbReference type="GO" id="GO:0009432">
    <property type="term" value="P:SOS response"/>
    <property type="evidence" value="ECO:0007669"/>
    <property type="project" value="UniProtKB-UniRule"/>
</dbReference>
<dbReference type="Gene3D" id="3.40.50.300">
    <property type="entry name" value="P-loop containing nucleotide triphosphate hydrolases"/>
    <property type="match status" value="1"/>
</dbReference>
<dbReference type="Gene3D" id="1.20.1050.90">
    <property type="entry name" value="RecF/RecN/SMC, N-terminal domain"/>
    <property type="match status" value="1"/>
</dbReference>
<dbReference type="HAMAP" id="MF_00365">
    <property type="entry name" value="RecF"/>
    <property type="match status" value="1"/>
</dbReference>
<dbReference type="InterPro" id="IPR001238">
    <property type="entry name" value="DNA-binding_RecF"/>
</dbReference>
<dbReference type="InterPro" id="IPR018078">
    <property type="entry name" value="DNA-binding_RecF_CS"/>
</dbReference>
<dbReference type="InterPro" id="IPR027417">
    <property type="entry name" value="P-loop_NTPase"/>
</dbReference>
<dbReference type="InterPro" id="IPR003395">
    <property type="entry name" value="RecF/RecN/SMC_N"/>
</dbReference>
<dbReference type="InterPro" id="IPR042174">
    <property type="entry name" value="RecF_2"/>
</dbReference>
<dbReference type="NCBIfam" id="TIGR00611">
    <property type="entry name" value="recf"/>
    <property type="match status" value="1"/>
</dbReference>
<dbReference type="PANTHER" id="PTHR32182">
    <property type="entry name" value="DNA REPLICATION AND REPAIR PROTEIN RECF"/>
    <property type="match status" value="1"/>
</dbReference>
<dbReference type="PANTHER" id="PTHR32182:SF0">
    <property type="entry name" value="DNA REPLICATION AND REPAIR PROTEIN RECF"/>
    <property type="match status" value="1"/>
</dbReference>
<dbReference type="Pfam" id="PF02463">
    <property type="entry name" value="SMC_N"/>
    <property type="match status" value="1"/>
</dbReference>
<dbReference type="SUPFAM" id="SSF52540">
    <property type="entry name" value="P-loop containing nucleoside triphosphate hydrolases"/>
    <property type="match status" value="1"/>
</dbReference>
<dbReference type="PROSITE" id="PS00617">
    <property type="entry name" value="RECF_1"/>
    <property type="match status" value="1"/>
</dbReference>
<dbReference type="PROSITE" id="PS00618">
    <property type="entry name" value="RECF_2"/>
    <property type="match status" value="1"/>
</dbReference>
<feature type="chain" id="PRO_0000196419" description="DNA replication and repair protein RecF">
    <location>
        <begin position="1"/>
        <end position="360"/>
    </location>
</feature>
<feature type="binding site" evidence="1">
    <location>
        <begin position="30"/>
        <end position="37"/>
    </location>
    <ligand>
        <name>ATP</name>
        <dbReference type="ChEBI" id="CHEBI:30616"/>
    </ligand>
</feature>
<proteinExistence type="inferred from homology"/>
<reference key="1">
    <citation type="submission" date="2003-06" db="EMBL/GenBank/DDBJ databases">
        <title>The complete genome sequence of Haemophilus ducreyi.</title>
        <authorList>
            <person name="Munson R.S. Jr."/>
            <person name="Ray W.C."/>
            <person name="Mahairas G."/>
            <person name="Sabo P."/>
            <person name="Mungur R."/>
            <person name="Johnson L."/>
            <person name="Nguyen D."/>
            <person name="Wang J."/>
            <person name="Forst C."/>
            <person name="Hood L."/>
        </authorList>
    </citation>
    <scope>NUCLEOTIDE SEQUENCE [LARGE SCALE GENOMIC DNA]</scope>
    <source>
        <strain>35000HP / ATCC 700724</strain>
    </source>
</reference>
<protein>
    <recommendedName>
        <fullName evidence="1">DNA replication and repair protein RecF</fullName>
    </recommendedName>
</protein>
<organism>
    <name type="scientific">Haemophilus ducreyi (strain 35000HP / ATCC 700724)</name>
    <dbReference type="NCBI Taxonomy" id="233412"/>
    <lineage>
        <taxon>Bacteria</taxon>
        <taxon>Pseudomonadati</taxon>
        <taxon>Pseudomonadota</taxon>
        <taxon>Gammaproteobacteria</taxon>
        <taxon>Pasteurellales</taxon>
        <taxon>Pasteurellaceae</taxon>
        <taxon>Haemophilus</taxon>
    </lineage>
</organism>
<name>RECF_HAEDU</name>
<gene>
    <name evidence="1" type="primary">recF</name>
    <name type="ordered locus">HD_0849</name>
</gene>